<proteinExistence type="inferred from homology"/>
<accession>Q54VJ9</accession>
<sequence>MSRLIINKSNSRICNTIVKNYLIQTKYTLQQQQHQQQQQQQQYVRSYCSLQQPKPSKPNMIEIVTHFFDKVKNKSFIIENYLNNPIPEQQQQLNKNIKINNTDKDNDTLEQIQLLDPLNNLGKRKGNEIFKVVENDLSNMTHNIMKTITDGVSANSTYSPSPSKKTHPILSSISSYYFELKGKRIRPTIVLLLSKALSSTVHGSQLKLAEIVEMIHTASLVHDDVIDEASTRRDVISINHSYTNKLAILCGDYLLARASVVLSTIRNPDVTECMSTALAELVEGEFMQAKSNGVVSFDNYLQKTYLKTGSLITNSCRSAAILSGADSNIINISTEFGKNLGLAFQIVDDLLDYTGSAEECGKATSVDLTLGLATAPVLYATQEFPQLEKLIKRKFSEIGDVEEAKRLVALSKGIEKTRNLAIEYCNRAIQSLLKLPQSESRDLLITLSHIVVTRTK</sequence>
<reference key="1">
    <citation type="journal article" date="2005" name="Nature">
        <title>The genome of the social amoeba Dictyostelium discoideum.</title>
        <authorList>
            <person name="Eichinger L."/>
            <person name="Pachebat J.A."/>
            <person name="Gloeckner G."/>
            <person name="Rajandream M.A."/>
            <person name="Sucgang R."/>
            <person name="Berriman M."/>
            <person name="Song J."/>
            <person name="Olsen R."/>
            <person name="Szafranski K."/>
            <person name="Xu Q."/>
            <person name="Tunggal B."/>
            <person name="Kummerfeld S."/>
            <person name="Madera M."/>
            <person name="Konfortov B.A."/>
            <person name="Rivero F."/>
            <person name="Bankier A.T."/>
            <person name="Lehmann R."/>
            <person name="Hamlin N."/>
            <person name="Davies R."/>
            <person name="Gaudet P."/>
            <person name="Fey P."/>
            <person name="Pilcher K."/>
            <person name="Chen G."/>
            <person name="Saunders D."/>
            <person name="Sodergren E.J."/>
            <person name="Davis P."/>
            <person name="Kerhornou A."/>
            <person name="Nie X."/>
            <person name="Hall N."/>
            <person name="Anjard C."/>
            <person name="Hemphill L."/>
            <person name="Bason N."/>
            <person name="Farbrother P."/>
            <person name="Desany B."/>
            <person name="Just E."/>
            <person name="Morio T."/>
            <person name="Rost R."/>
            <person name="Churcher C.M."/>
            <person name="Cooper J."/>
            <person name="Haydock S."/>
            <person name="van Driessche N."/>
            <person name="Cronin A."/>
            <person name="Goodhead I."/>
            <person name="Muzny D.M."/>
            <person name="Mourier T."/>
            <person name="Pain A."/>
            <person name="Lu M."/>
            <person name="Harper D."/>
            <person name="Lindsay R."/>
            <person name="Hauser H."/>
            <person name="James K.D."/>
            <person name="Quiles M."/>
            <person name="Madan Babu M."/>
            <person name="Saito T."/>
            <person name="Buchrieser C."/>
            <person name="Wardroper A."/>
            <person name="Felder M."/>
            <person name="Thangavelu M."/>
            <person name="Johnson D."/>
            <person name="Knights A."/>
            <person name="Loulseged H."/>
            <person name="Mungall K.L."/>
            <person name="Oliver K."/>
            <person name="Price C."/>
            <person name="Quail M.A."/>
            <person name="Urushihara H."/>
            <person name="Hernandez J."/>
            <person name="Rabbinowitsch E."/>
            <person name="Steffen D."/>
            <person name="Sanders M."/>
            <person name="Ma J."/>
            <person name="Kohara Y."/>
            <person name="Sharp S."/>
            <person name="Simmonds M.N."/>
            <person name="Spiegler S."/>
            <person name="Tivey A."/>
            <person name="Sugano S."/>
            <person name="White B."/>
            <person name="Walker D."/>
            <person name="Woodward J.R."/>
            <person name="Winckler T."/>
            <person name="Tanaka Y."/>
            <person name="Shaulsky G."/>
            <person name="Schleicher M."/>
            <person name="Weinstock G.M."/>
            <person name="Rosenthal A."/>
            <person name="Cox E.C."/>
            <person name="Chisholm R.L."/>
            <person name="Gibbs R.A."/>
            <person name="Loomis W.F."/>
            <person name="Platzer M."/>
            <person name="Kay R.R."/>
            <person name="Williams J.G."/>
            <person name="Dear P.H."/>
            <person name="Noegel A.A."/>
            <person name="Barrell B.G."/>
            <person name="Kuspa A."/>
        </authorList>
    </citation>
    <scope>NUCLEOTIDE SEQUENCE [LARGE SCALE GENOMIC DNA]</scope>
    <source>
        <strain>AX4</strain>
    </source>
</reference>
<keyword id="KW-0414">Isoprene biosynthesis</keyword>
<keyword id="KW-0460">Magnesium</keyword>
<keyword id="KW-0479">Metal-binding</keyword>
<keyword id="KW-0496">Mitochondrion</keyword>
<keyword id="KW-1185">Reference proteome</keyword>
<keyword id="KW-0808">Transferase</keyword>
<keyword id="KW-0831">Ubiquinone biosynthesis</keyword>
<gene>
    <name type="primary">coq1</name>
    <name type="ORF">DDB_G0280293</name>
</gene>
<protein>
    <recommendedName>
        <fullName>Decaprenyl-diphosphate synthase</fullName>
        <ecNumber>2.5.1.91</ecNumber>
    </recommendedName>
    <alternativeName>
        <fullName>All-trans-decaprenyl-diphosphate synthase subunit 1</fullName>
    </alternativeName>
    <alternativeName>
        <fullName>Coenzyme Q biosynthesis protein 1</fullName>
    </alternativeName>
    <alternativeName>
        <fullName>Decaprenyl pyrophosphate synthase</fullName>
    </alternativeName>
    <alternativeName>
        <fullName>Trans-prenyltransferase</fullName>
        <shortName>TPT</shortName>
    </alternativeName>
</protein>
<comment type="function">
    <text evidence="1">Supplies decaprenyl diphosphate, the precursor for the side chain of the isoprenoid quinones ubiquinone-10.</text>
</comment>
<comment type="catalytic activity">
    <reaction>
        <text>7 isopentenyl diphosphate + (2E,6E)-farnesyl diphosphate = all-trans-decaprenyl diphosphate + 7 diphosphate</text>
        <dbReference type="Rhea" id="RHEA:27802"/>
        <dbReference type="ChEBI" id="CHEBI:33019"/>
        <dbReference type="ChEBI" id="CHEBI:60721"/>
        <dbReference type="ChEBI" id="CHEBI:128769"/>
        <dbReference type="ChEBI" id="CHEBI:175763"/>
        <dbReference type="EC" id="2.5.1.91"/>
    </reaction>
</comment>
<comment type="cofactor">
    <cofactor evidence="2">
        <name>Mg(2+)</name>
        <dbReference type="ChEBI" id="CHEBI:18420"/>
    </cofactor>
    <text evidence="2">Binds 2 Mg(2+) ions per subunit.</text>
</comment>
<comment type="pathway">
    <text>Cofactor biosynthesis; ubiquinone biosynthesis.</text>
</comment>
<comment type="subcellular location">
    <subcellularLocation>
        <location evidence="4">Mitochondrion</location>
    </subcellularLocation>
</comment>
<comment type="similarity">
    <text evidence="5">Belongs to the FPP/GGPP synthase family.</text>
</comment>
<name>DPS1_DICDI</name>
<feature type="chain" id="PRO_0000328212" description="Decaprenyl-diphosphate synthase">
    <location>
        <begin position="1"/>
        <end position="456"/>
    </location>
</feature>
<feature type="binding site" evidence="2">
    <location>
        <position position="183"/>
    </location>
    <ligand>
        <name>isopentenyl diphosphate</name>
        <dbReference type="ChEBI" id="CHEBI:128769"/>
    </ligand>
</feature>
<feature type="binding site" evidence="2">
    <location>
        <position position="186"/>
    </location>
    <ligand>
        <name>isopentenyl diphosphate</name>
        <dbReference type="ChEBI" id="CHEBI:128769"/>
    </ligand>
</feature>
<feature type="binding site" evidence="3">
    <location>
        <position position="216"/>
    </location>
    <ligand>
        <name>isopentenyl diphosphate</name>
        <dbReference type="ChEBI" id="CHEBI:128769"/>
    </ligand>
</feature>
<feature type="binding site" evidence="2">
    <location>
        <position position="223"/>
    </location>
    <ligand>
        <name>Mg(2+)</name>
        <dbReference type="ChEBI" id="CHEBI:18420"/>
        <label>1</label>
    </ligand>
</feature>
<feature type="binding site" evidence="2">
    <location>
        <position position="223"/>
    </location>
    <ligand>
        <name>Mg(2+)</name>
        <dbReference type="ChEBI" id="CHEBI:18420"/>
        <label>2</label>
    </ligand>
</feature>
<feature type="binding site" evidence="2">
    <location>
        <position position="227"/>
    </location>
    <ligand>
        <name>Mg(2+)</name>
        <dbReference type="ChEBI" id="CHEBI:18420"/>
        <label>1</label>
    </ligand>
</feature>
<feature type="binding site" evidence="2">
    <location>
        <position position="227"/>
    </location>
    <ligand>
        <name>Mg(2+)</name>
        <dbReference type="ChEBI" id="CHEBI:18420"/>
        <label>2</label>
    </ligand>
</feature>
<feature type="binding site" evidence="2">
    <location>
        <position position="233"/>
    </location>
    <ligand>
        <name>isopentenyl diphosphate</name>
        <dbReference type="ChEBI" id="CHEBI:128769"/>
    </ligand>
</feature>
<organism>
    <name type="scientific">Dictyostelium discoideum</name>
    <name type="common">Social amoeba</name>
    <dbReference type="NCBI Taxonomy" id="44689"/>
    <lineage>
        <taxon>Eukaryota</taxon>
        <taxon>Amoebozoa</taxon>
        <taxon>Evosea</taxon>
        <taxon>Eumycetozoa</taxon>
        <taxon>Dictyostelia</taxon>
        <taxon>Dictyosteliales</taxon>
        <taxon>Dictyosteliaceae</taxon>
        <taxon>Dictyostelium</taxon>
    </lineage>
</organism>
<dbReference type="EC" id="2.5.1.91"/>
<dbReference type="EMBL" id="AAFI02000035">
    <property type="protein sequence ID" value="EAL67373.1"/>
    <property type="molecule type" value="Genomic_DNA"/>
</dbReference>
<dbReference type="RefSeq" id="XP_641356.1">
    <property type="nucleotide sequence ID" value="XM_636264.1"/>
</dbReference>
<dbReference type="SMR" id="Q54VJ9"/>
<dbReference type="FunCoup" id="Q54VJ9">
    <property type="interactions" value="146"/>
</dbReference>
<dbReference type="STRING" id="44689.Q54VJ9"/>
<dbReference type="PaxDb" id="44689-DDB0231590"/>
<dbReference type="EnsemblProtists" id="EAL67373">
    <property type="protein sequence ID" value="EAL67373"/>
    <property type="gene ID" value="DDB_G0280293"/>
</dbReference>
<dbReference type="GeneID" id="8622490"/>
<dbReference type="KEGG" id="ddi:DDB_G0280293"/>
<dbReference type="dictyBase" id="DDB_G0280293">
    <property type="gene designation" value="coq1"/>
</dbReference>
<dbReference type="VEuPathDB" id="AmoebaDB:DDB_G0280293"/>
<dbReference type="eggNOG" id="KOG0776">
    <property type="taxonomic scope" value="Eukaryota"/>
</dbReference>
<dbReference type="HOGENOM" id="CLU_014015_2_2_1"/>
<dbReference type="InParanoid" id="Q54VJ9"/>
<dbReference type="OMA" id="AFDYYLH"/>
<dbReference type="PhylomeDB" id="Q54VJ9"/>
<dbReference type="Reactome" id="R-DDI-2142789">
    <property type="pathway name" value="Ubiquinol biosynthesis"/>
</dbReference>
<dbReference type="UniPathway" id="UPA00232"/>
<dbReference type="PRO" id="PR:Q54VJ9"/>
<dbReference type="Proteomes" id="UP000002195">
    <property type="component" value="Chromosome 3"/>
</dbReference>
<dbReference type="GO" id="GO:0005739">
    <property type="term" value="C:mitochondrion"/>
    <property type="evidence" value="ECO:0000250"/>
    <property type="project" value="dictyBase"/>
</dbReference>
<dbReference type="GO" id="GO:0032476">
    <property type="term" value="C:polyprenyl diphosphate synthase complex"/>
    <property type="evidence" value="ECO:0000318"/>
    <property type="project" value="GO_Central"/>
</dbReference>
<dbReference type="GO" id="GO:0097269">
    <property type="term" value="F:all-trans-decaprenyl-diphosphate synthase activity"/>
    <property type="evidence" value="ECO:0007669"/>
    <property type="project" value="UniProtKB-EC"/>
</dbReference>
<dbReference type="GO" id="GO:0000010">
    <property type="term" value="F:heptaprenyl diphosphate synthase activity"/>
    <property type="evidence" value="ECO:0000250"/>
    <property type="project" value="dictyBase"/>
</dbReference>
<dbReference type="GO" id="GO:0046872">
    <property type="term" value="F:metal ion binding"/>
    <property type="evidence" value="ECO:0007669"/>
    <property type="project" value="UniProtKB-KW"/>
</dbReference>
<dbReference type="GO" id="GO:0004659">
    <property type="term" value="F:prenyltransferase activity"/>
    <property type="evidence" value="ECO:0000318"/>
    <property type="project" value="GO_Central"/>
</dbReference>
<dbReference type="GO" id="GO:0008299">
    <property type="term" value="P:isoprenoid biosynthetic process"/>
    <property type="evidence" value="ECO:0000318"/>
    <property type="project" value="GO_Central"/>
</dbReference>
<dbReference type="GO" id="GO:0006744">
    <property type="term" value="P:ubiquinone biosynthetic process"/>
    <property type="evidence" value="ECO:0000318"/>
    <property type="project" value="GO_Central"/>
</dbReference>
<dbReference type="GO" id="GO:0006743">
    <property type="term" value="P:ubiquinone metabolic process"/>
    <property type="evidence" value="ECO:0000250"/>
    <property type="project" value="dictyBase"/>
</dbReference>
<dbReference type="CDD" id="cd00685">
    <property type="entry name" value="Trans_IPPS_HT"/>
    <property type="match status" value="1"/>
</dbReference>
<dbReference type="Gene3D" id="1.10.600.10">
    <property type="entry name" value="Farnesyl Diphosphate Synthase"/>
    <property type="match status" value="1"/>
</dbReference>
<dbReference type="InterPro" id="IPR008949">
    <property type="entry name" value="Isoprenoid_synthase_dom_sf"/>
</dbReference>
<dbReference type="InterPro" id="IPR000092">
    <property type="entry name" value="Polyprenyl_synt"/>
</dbReference>
<dbReference type="InterPro" id="IPR033749">
    <property type="entry name" value="Polyprenyl_synt_CS"/>
</dbReference>
<dbReference type="PANTHER" id="PTHR12001:SF69">
    <property type="entry name" value="ALL TRANS-POLYPRENYL-DIPHOSPHATE SYNTHASE PDSS1"/>
    <property type="match status" value="1"/>
</dbReference>
<dbReference type="PANTHER" id="PTHR12001">
    <property type="entry name" value="GERANYLGERANYL PYROPHOSPHATE SYNTHASE"/>
    <property type="match status" value="1"/>
</dbReference>
<dbReference type="Pfam" id="PF00348">
    <property type="entry name" value="polyprenyl_synt"/>
    <property type="match status" value="1"/>
</dbReference>
<dbReference type="SFLD" id="SFLDS00005">
    <property type="entry name" value="Isoprenoid_Synthase_Type_I"/>
    <property type="match status" value="1"/>
</dbReference>
<dbReference type="SUPFAM" id="SSF48576">
    <property type="entry name" value="Terpenoid synthases"/>
    <property type="match status" value="1"/>
</dbReference>
<dbReference type="PROSITE" id="PS00444">
    <property type="entry name" value="POLYPRENYL_SYNTHASE_2"/>
    <property type="match status" value="1"/>
</dbReference>
<evidence type="ECO:0000250" key="1"/>
<evidence type="ECO:0000250" key="2">
    <source>
        <dbReference type="UniProtKB" id="P14324"/>
    </source>
</evidence>
<evidence type="ECO:0000250" key="3">
    <source>
        <dbReference type="UniProtKB" id="Q12051"/>
    </source>
</evidence>
<evidence type="ECO:0000250" key="4">
    <source>
        <dbReference type="UniProtKB" id="Q5T2R2"/>
    </source>
</evidence>
<evidence type="ECO:0000305" key="5"/>